<accession>Q2M2Z5</accession>
<accession>B4DDE9</accession>
<accession>B4DK54</accession>
<accession>Q4G0M8</accession>
<accession>Q4G0S5</accession>
<accession>Q5BKY3</accession>
<accession>Q6P0M6</accession>
<accession>Q71ME0</accession>
<accession>Q9NZ35</accession>
<sequence>MSRTLASAVPLSSPDYYERLGQLQHGLRDSEKKRLDLEKKLYEYNQSDTCRVKLKYVKLKNYLKEICESEKKAHTRNQEYLKRFERVQAHVVHFTTNTEKLQKLKLEYETQIKKMLCSKDSLGLKEELTDEDREKVAVHEGINSGTAMSRGLYQPATIFMGRQMSAILSMRDFSTEHKSPQPTKNFSIPDPHSHRQTAQSSNVTDSCVVQTSNDTQCLNKSDNIDGKASLQIGEKMPVTASVLSEEEQTHCLEIGSNTRHGKSNLSEGKKSAELNSPLRERLSPENRTTDLKCDSSSGSEGEILTREHIEVEEKRASPPVSPIPVSEYCESENKWSQEKHSPWEGVSDHLAHREPKSQKPFRKMQEEEEESWSTSSDLTISISEDDLILESPEPQPNPGGKMEGEDGIEALKLIHAEQERVALSTEKNCILQTLSSPDSEKESSTNAPTREPGQTPDSDVPRAQVGQHVATLKEHDNSVKEEATALLRKALTEECGRRSAIHSSESSCSLPSILNDNSGIKEAKPAVWLNSVPTREQEVSSGCGDKSKKENVAADIPITETEAYQLLKKATLQDNTNQTENRFQKTDASVSHLSGLNIGSGAFETKTANKIASEASFSSSEGSPLSRHENKKKPVINLKSNALWDESDDSNSEIEAALRPRNHNTDDSDDFYD</sequence>
<organism>
    <name type="scientific">Homo sapiens</name>
    <name type="common">Human</name>
    <dbReference type="NCBI Taxonomy" id="9606"/>
    <lineage>
        <taxon>Eukaryota</taxon>
        <taxon>Metazoa</taxon>
        <taxon>Chordata</taxon>
        <taxon>Craniata</taxon>
        <taxon>Vertebrata</taxon>
        <taxon>Euteleostomi</taxon>
        <taxon>Mammalia</taxon>
        <taxon>Eutheria</taxon>
        <taxon>Euarchontoglires</taxon>
        <taxon>Primates</taxon>
        <taxon>Haplorrhini</taxon>
        <taxon>Catarrhini</taxon>
        <taxon>Hominidae</taxon>
        <taxon>Homo</taxon>
    </lineage>
</organism>
<dbReference type="EMBL" id="AK293166">
    <property type="protein sequence ID" value="BAG56710.1"/>
    <property type="molecule type" value="mRNA"/>
</dbReference>
<dbReference type="EMBL" id="AK296399">
    <property type="protein sequence ID" value="BAG59066.1"/>
    <property type="status" value="ALT_INIT"/>
    <property type="molecule type" value="mRNA"/>
</dbReference>
<dbReference type="EMBL" id="AF451990">
    <property type="protein sequence ID" value="AAP97689.1"/>
    <property type="status" value="ALT_FRAME"/>
    <property type="molecule type" value="mRNA"/>
</dbReference>
<dbReference type="EMBL" id="AL110120">
    <property type="status" value="NOT_ANNOTATED_CDS"/>
    <property type="molecule type" value="Genomic_DNA"/>
</dbReference>
<dbReference type="EMBL" id="AL117332">
    <property type="status" value="NOT_ANNOTATED_CDS"/>
    <property type="molecule type" value="Genomic_DNA"/>
</dbReference>
<dbReference type="EMBL" id="AL121759">
    <property type="status" value="NOT_ANNOTATED_CDS"/>
    <property type="molecule type" value="Genomic_DNA"/>
</dbReference>
<dbReference type="EMBL" id="CH471133">
    <property type="protein sequence ID" value="EAX10188.1"/>
    <property type="molecule type" value="Genomic_DNA"/>
</dbReference>
<dbReference type="EMBL" id="BC039296">
    <property type="protein sequence ID" value="AAH39296.1"/>
    <property type="status" value="ALT_FRAME"/>
    <property type="molecule type" value="mRNA"/>
</dbReference>
<dbReference type="EMBL" id="BC045826">
    <property type="protein sequence ID" value="AAH45826.1"/>
    <property type="molecule type" value="mRNA"/>
</dbReference>
<dbReference type="EMBL" id="BC065550">
    <property type="protein sequence ID" value="AAH65550.1"/>
    <property type="molecule type" value="mRNA"/>
</dbReference>
<dbReference type="EMBL" id="BC090879">
    <property type="protein sequence ID" value="AAH90879.2"/>
    <property type="molecule type" value="mRNA"/>
</dbReference>
<dbReference type="EMBL" id="BC105093">
    <property type="protein sequence ID" value="AAI05094.1"/>
    <property type="molecule type" value="mRNA"/>
</dbReference>
<dbReference type="EMBL" id="BC113370">
    <property type="protein sequence ID" value="AAI13371.1"/>
    <property type="molecule type" value="mRNA"/>
</dbReference>
<dbReference type="EMBL" id="AF220187">
    <property type="protein sequence ID" value="AAF67652.1"/>
    <property type="status" value="ALT_FRAME"/>
    <property type="molecule type" value="mRNA"/>
</dbReference>
<dbReference type="CCDS" id="CCDS74706.1">
    <molecule id="Q2M2Z5-1"/>
</dbReference>
<dbReference type="CCDS" id="CCDS74707.1">
    <molecule id="Q2M2Z5-2"/>
</dbReference>
<dbReference type="CCDS" id="CCDS74708.1">
    <molecule id="Q2M2Z5-5"/>
</dbReference>
<dbReference type="RefSeq" id="NP_001156494.1">
    <molecule id="Q2M2Z5-2"/>
    <property type="nucleotide sequence ID" value="NM_001163022.3"/>
</dbReference>
<dbReference type="RefSeq" id="NP_001156495.1">
    <molecule id="Q2M2Z5-5"/>
    <property type="nucleotide sequence ID" value="NM_001163023.3"/>
</dbReference>
<dbReference type="RefSeq" id="NP_060944.3">
    <molecule id="Q2M2Z5-1"/>
    <property type="nucleotide sequence ID" value="NM_018474.4"/>
</dbReference>
<dbReference type="SMR" id="Q2M2Z5"/>
<dbReference type="BioGRID" id="120959">
    <property type="interactions" value="27"/>
</dbReference>
<dbReference type="FunCoup" id="Q2M2Z5">
    <property type="interactions" value="348"/>
</dbReference>
<dbReference type="IntAct" id="Q2M2Z5">
    <property type="interactions" value="17"/>
</dbReference>
<dbReference type="MINT" id="Q2M2Z5"/>
<dbReference type="STRING" id="9606.ENSP00000479542"/>
<dbReference type="iPTMnet" id="Q2M2Z5"/>
<dbReference type="PhosphoSitePlus" id="Q2M2Z5"/>
<dbReference type="BioMuta" id="KIZ"/>
<dbReference type="DMDM" id="257051030"/>
<dbReference type="jPOST" id="Q2M2Z5"/>
<dbReference type="MassIVE" id="Q2M2Z5"/>
<dbReference type="PaxDb" id="9606-ENSP00000479542"/>
<dbReference type="PeptideAtlas" id="Q2M2Z5"/>
<dbReference type="ProteomicsDB" id="61359">
    <molecule id="Q2M2Z5-1"/>
</dbReference>
<dbReference type="ProteomicsDB" id="61360">
    <molecule id="Q2M2Z5-2"/>
</dbReference>
<dbReference type="ProteomicsDB" id="61361">
    <molecule id="Q2M2Z5-3"/>
</dbReference>
<dbReference type="ProteomicsDB" id="61362">
    <molecule id="Q2M2Z5-4"/>
</dbReference>
<dbReference type="ProteomicsDB" id="61363">
    <molecule id="Q2M2Z5-5"/>
</dbReference>
<dbReference type="Pumba" id="Q2M2Z5"/>
<dbReference type="Antibodypedia" id="24776">
    <property type="antibodies" value="129 antibodies from 25 providers"/>
</dbReference>
<dbReference type="DNASU" id="55857"/>
<dbReference type="Ensembl" id="ENST00000616848.4">
    <molecule id="Q2M2Z5-5"/>
    <property type="protein sequence ID" value="ENSP00000480612.1"/>
    <property type="gene ID" value="ENSG00000088970.16"/>
</dbReference>
<dbReference type="Ensembl" id="ENST00000619189.5">
    <molecule id="Q2M2Z5-1"/>
    <property type="protein sequence ID" value="ENSP00000479542.1"/>
    <property type="gene ID" value="ENSG00000088970.16"/>
</dbReference>
<dbReference type="Ensembl" id="ENST00000620891.4">
    <molecule id="Q2M2Z5-2"/>
    <property type="protein sequence ID" value="ENSP00000478019.1"/>
    <property type="gene ID" value="ENSG00000088970.16"/>
</dbReference>
<dbReference type="GeneID" id="55857"/>
<dbReference type="KEGG" id="hsa:55857"/>
<dbReference type="MANE-Select" id="ENST00000619189.5">
    <property type="protein sequence ID" value="ENSP00000479542.1"/>
    <property type="RefSeq nucleotide sequence ID" value="NM_018474.6"/>
    <property type="RefSeq protein sequence ID" value="NP_060944.3"/>
</dbReference>
<dbReference type="UCSC" id="uc032pdl.2">
    <molecule id="Q2M2Z5-1"/>
    <property type="organism name" value="human"/>
</dbReference>
<dbReference type="AGR" id="HGNC:15865"/>
<dbReference type="CTD" id="55857"/>
<dbReference type="DisGeNET" id="55857"/>
<dbReference type="GeneCards" id="KIZ"/>
<dbReference type="HGNC" id="HGNC:15865">
    <property type="gene designation" value="KIZ"/>
</dbReference>
<dbReference type="HPA" id="ENSG00000088970">
    <property type="expression patterns" value="Low tissue specificity"/>
</dbReference>
<dbReference type="MalaCards" id="KIZ"/>
<dbReference type="MIM" id="615757">
    <property type="type" value="gene"/>
</dbReference>
<dbReference type="MIM" id="615780">
    <property type="type" value="phenotype"/>
</dbReference>
<dbReference type="neXtProt" id="NX_Q2M2Z5"/>
<dbReference type="OpenTargets" id="ENSG00000088970"/>
<dbReference type="Orphanet" id="791">
    <property type="disease" value="Retinitis pigmentosa"/>
</dbReference>
<dbReference type="PharmGKB" id="PA165392491"/>
<dbReference type="VEuPathDB" id="HostDB:ENSG00000088970"/>
<dbReference type="eggNOG" id="ENOG502R72X">
    <property type="taxonomic scope" value="Eukaryota"/>
</dbReference>
<dbReference type="GeneTree" id="ENSGT00390000010121"/>
<dbReference type="HOGENOM" id="CLU_026235_0_0_1"/>
<dbReference type="InParanoid" id="Q2M2Z5"/>
<dbReference type="OMA" id="EKEQTHC"/>
<dbReference type="OrthoDB" id="8015657at2759"/>
<dbReference type="PAN-GO" id="Q2M2Z5">
    <property type="GO annotations" value="2 GO annotations based on evolutionary models"/>
</dbReference>
<dbReference type="PhylomeDB" id="Q2M2Z5"/>
<dbReference type="PathwayCommons" id="Q2M2Z5"/>
<dbReference type="SignaLink" id="Q2M2Z5"/>
<dbReference type="SIGNOR" id="Q2M2Z5"/>
<dbReference type="BioGRID-ORCS" id="55857">
    <property type="hits" value="7 hits in 263 CRISPR screens"/>
</dbReference>
<dbReference type="CD-CODE" id="8C2F96ED">
    <property type="entry name" value="Centrosome"/>
</dbReference>
<dbReference type="ChiTaRS" id="KIZ">
    <property type="organism name" value="human"/>
</dbReference>
<dbReference type="GenomeRNAi" id="55857"/>
<dbReference type="Pharos" id="Q2M2Z5">
    <property type="development level" value="Tbio"/>
</dbReference>
<dbReference type="PRO" id="PR:Q2M2Z5"/>
<dbReference type="Proteomes" id="UP000005640">
    <property type="component" value="Chromosome 20"/>
</dbReference>
<dbReference type="RNAct" id="Q2M2Z5">
    <property type="molecule type" value="protein"/>
</dbReference>
<dbReference type="Bgee" id="ENSG00000088970">
    <property type="expression patterns" value="Expressed in sperm and 207 other cell types or tissues"/>
</dbReference>
<dbReference type="ExpressionAtlas" id="Q2M2Z5">
    <property type="expression patterns" value="baseline and differential"/>
</dbReference>
<dbReference type="GO" id="GO:0042995">
    <property type="term" value="C:cell projection"/>
    <property type="evidence" value="ECO:0007669"/>
    <property type="project" value="UniProtKB-KW"/>
</dbReference>
<dbReference type="GO" id="GO:0005813">
    <property type="term" value="C:centrosome"/>
    <property type="evidence" value="ECO:0000314"/>
    <property type="project" value="UniProtKB"/>
</dbReference>
<dbReference type="GO" id="GO:0005737">
    <property type="term" value="C:cytoplasm"/>
    <property type="evidence" value="ECO:0007669"/>
    <property type="project" value="UniProtKB-KW"/>
</dbReference>
<dbReference type="GO" id="GO:0019901">
    <property type="term" value="F:protein kinase binding"/>
    <property type="evidence" value="ECO:0000353"/>
    <property type="project" value="UniProtKB"/>
</dbReference>
<dbReference type="GO" id="GO:0007051">
    <property type="term" value="P:spindle organization"/>
    <property type="evidence" value="ECO:0000315"/>
    <property type="project" value="UniProtKB"/>
</dbReference>
<dbReference type="InterPro" id="IPR026742">
    <property type="entry name" value="Centrosomal_kizuma"/>
</dbReference>
<dbReference type="PANTHER" id="PTHR16299">
    <property type="entry name" value="CENTROSOMAL PROTEIN KIZUNA"/>
    <property type="match status" value="1"/>
</dbReference>
<dbReference type="PANTHER" id="PTHR16299:SF2">
    <property type="entry name" value="CENTROSOMAL PROTEIN KIZUNA"/>
    <property type="match status" value="1"/>
</dbReference>
<proteinExistence type="evidence at protein level"/>
<protein>
    <recommendedName>
        <fullName>Centrosomal protein kizuna</fullName>
    </recommendedName>
    <alternativeName>
        <fullName>Polo-like kinase 1 substrate 1</fullName>
    </alternativeName>
</protein>
<keyword id="KW-0025">Alternative splicing</keyword>
<keyword id="KW-0966">Cell projection</keyword>
<keyword id="KW-0963">Cytoplasm</keyword>
<keyword id="KW-0206">Cytoskeleton</keyword>
<keyword id="KW-0597">Phosphoprotein</keyword>
<keyword id="KW-1267">Proteomics identification</keyword>
<keyword id="KW-1185">Reference proteome</keyword>
<keyword id="KW-0682">Retinitis pigmentosa</keyword>
<name>KIZ_HUMAN</name>
<gene>
    <name type="primary">KIZ</name>
    <name type="synonym">C20orf19</name>
    <name type="synonym">NCRNA00153</name>
    <name type="synonym">PLK1S1</name>
    <name type="ORF">HT013</name>
</gene>
<evidence type="ECO:0000256" key="1">
    <source>
        <dbReference type="SAM" id="MobiDB-lite"/>
    </source>
</evidence>
<evidence type="ECO:0000269" key="2">
    <source>
    </source>
</evidence>
<evidence type="ECO:0000269" key="3">
    <source>
    </source>
</evidence>
<evidence type="ECO:0000269" key="4">
    <source>
    </source>
</evidence>
<evidence type="ECO:0000269" key="5">
    <source>
    </source>
</evidence>
<evidence type="ECO:0000269" key="6">
    <source>
    </source>
</evidence>
<evidence type="ECO:0000269" key="7">
    <source ref="4"/>
</evidence>
<evidence type="ECO:0000303" key="8">
    <source>
    </source>
</evidence>
<evidence type="ECO:0000303" key="9">
    <source>
    </source>
</evidence>
<evidence type="ECO:0000303" key="10">
    <source ref="2"/>
</evidence>
<evidence type="ECO:0000305" key="11"/>
<evidence type="ECO:0007744" key="12">
    <source>
    </source>
</evidence>
<reference key="1">
    <citation type="journal article" date="2004" name="Nat. Genet.">
        <title>Complete sequencing and characterization of 21,243 full-length human cDNAs.</title>
        <authorList>
            <person name="Ota T."/>
            <person name="Suzuki Y."/>
            <person name="Nishikawa T."/>
            <person name="Otsuki T."/>
            <person name="Sugiyama T."/>
            <person name="Irie R."/>
            <person name="Wakamatsu A."/>
            <person name="Hayashi K."/>
            <person name="Sato H."/>
            <person name="Nagai K."/>
            <person name="Kimura K."/>
            <person name="Makita H."/>
            <person name="Sekine M."/>
            <person name="Obayashi M."/>
            <person name="Nishi T."/>
            <person name="Shibahara T."/>
            <person name="Tanaka T."/>
            <person name="Ishii S."/>
            <person name="Yamamoto J."/>
            <person name="Saito K."/>
            <person name="Kawai Y."/>
            <person name="Isono Y."/>
            <person name="Nakamura Y."/>
            <person name="Nagahari K."/>
            <person name="Murakami K."/>
            <person name="Yasuda T."/>
            <person name="Iwayanagi T."/>
            <person name="Wagatsuma M."/>
            <person name="Shiratori A."/>
            <person name="Sudo H."/>
            <person name="Hosoiri T."/>
            <person name="Kaku Y."/>
            <person name="Kodaira H."/>
            <person name="Kondo H."/>
            <person name="Sugawara M."/>
            <person name="Takahashi M."/>
            <person name="Kanda K."/>
            <person name="Yokoi T."/>
            <person name="Furuya T."/>
            <person name="Kikkawa E."/>
            <person name="Omura Y."/>
            <person name="Abe K."/>
            <person name="Kamihara K."/>
            <person name="Katsuta N."/>
            <person name="Sato K."/>
            <person name="Tanikawa M."/>
            <person name="Yamazaki M."/>
            <person name="Ninomiya K."/>
            <person name="Ishibashi T."/>
            <person name="Yamashita H."/>
            <person name="Murakawa K."/>
            <person name="Fujimori K."/>
            <person name="Tanai H."/>
            <person name="Kimata M."/>
            <person name="Watanabe M."/>
            <person name="Hiraoka S."/>
            <person name="Chiba Y."/>
            <person name="Ishida S."/>
            <person name="Ono Y."/>
            <person name="Takiguchi S."/>
            <person name="Watanabe S."/>
            <person name="Yosida M."/>
            <person name="Hotuta T."/>
            <person name="Kusano J."/>
            <person name="Kanehori K."/>
            <person name="Takahashi-Fujii A."/>
            <person name="Hara H."/>
            <person name="Tanase T.-O."/>
            <person name="Nomura Y."/>
            <person name="Togiya S."/>
            <person name="Komai F."/>
            <person name="Hara R."/>
            <person name="Takeuchi K."/>
            <person name="Arita M."/>
            <person name="Imose N."/>
            <person name="Musashino K."/>
            <person name="Yuuki H."/>
            <person name="Oshima A."/>
            <person name="Sasaki N."/>
            <person name="Aotsuka S."/>
            <person name="Yoshikawa Y."/>
            <person name="Matsunawa H."/>
            <person name="Ichihara T."/>
            <person name="Shiohata N."/>
            <person name="Sano S."/>
            <person name="Moriya S."/>
            <person name="Momiyama H."/>
            <person name="Satoh N."/>
            <person name="Takami S."/>
            <person name="Terashima Y."/>
            <person name="Suzuki O."/>
            <person name="Nakagawa S."/>
            <person name="Senoh A."/>
            <person name="Mizoguchi H."/>
            <person name="Goto Y."/>
            <person name="Shimizu F."/>
            <person name="Wakebe H."/>
            <person name="Hishigaki H."/>
            <person name="Watanabe T."/>
            <person name="Sugiyama A."/>
            <person name="Takemoto M."/>
            <person name="Kawakami B."/>
            <person name="Yamazaki M."/>
            <person name="Watanabe K."/>
            <person name="Kumagai A."/>
            <person name="Itakura S."/>
            <person name="Fukuzumi Y."/>
            <person name="Fujimori Y."/>
            <person name="Komiyama M."/>
            <person name="Tashiro H."/>
            <person name="Tanigami A."/>
            <person name="Fujiwara T."/>
            <person name="Ono T."/>
            <person name="Yamada K."/>
            <person name="Fujii Y."/>
            <person name="Ozaki K."/>
            <person name="Hirao M."/>
            <person name="Ohmori Y."/>
            <person name="Kawabata A."/>
            <person name="Hikiji T."/>
            <person name="Kobatake N."/>
            <person name="Inagaki H."/>
            <person name="Ikema Y."/>
            <person name="Okamoto S."/>
            <person name="Okitani R."/>
            <person name="Kawakami T."/>
            <person name="Noguchi S."/>
            <person name="Itoh T."/>
            <person name="Shigeta K."/>
            <person name="Senba T."/>
            <person name="Matsumura K."/>
            <person name="Nakajima Y."/>
            <person name="Mizuno T."/>
            <person name="Morinaga M."/>
            <person name="Sasaki M."/>
            <person name="Togashi T."/>
            <person name="Oyama M."/>
            <person name="Hata H."/>
            <person name="Watanabe M."/>
            <person name="Komatsu T."/>
            <person name="Mizushima-Sugano J."/>
            <person name="Satoh T."/>
            <person name="Shirai Y."/>
            <person name="Takahashi Y."/>
            <person name="Nakagawa K."/>
            <person name="Okumura K."/>
            <person name="Nagase T."/>
            <person name="Nomura N."/>
            <person name="Kikuchi H."/>
            <person name="Masuho Y."/>
            <person name="Yamashita R."/>
            <person name="Nakai K."/>
            <person name="Yada T."/>
            <person name="Nakamura Y."/>
            <person name="Ohara O."/>
            <person name="Isogai T."/>
            <person name="Sugano S."/>
        </authorList>
    </citation>
    <scope>NUCLEOTIDE SEQUENCE [LARGE SCALE MRNA] (ISOFORM 5)</scope>
    <scope>NUCLEOTIDE SEQUENCE [LARGE SCALE MRNA] OF 202-672 (ISOFORM 4)</scope>
    <scope>VARIANT THR-236</scope>
    <source>
        <tissue>Neuroblastoma</tissue>
        <tissue>Thalamus</tissue>
    </source>
</reference>
<reference key="2">
    <citation type="submission" date="2001-11" db="EMBL/GenBank/DDBJ databases">
        <authorList>
            <person name="Guo J.H."/>
            <person name="Yu L."/>
        </authorList>
    </citation>
    <scope>NUCLEOTIDE SEQUENCE [LARGE SCALE MRNA] (ISOFORM 4)</scope>
    <source>
        <tissue>Hypothalamus</tissue>
    </source>
</reference>
<reference key="3">
    <citation type="journal article" date="2001" name="Nature">
        <title>The DNA sequence and comparative analysis of human chromosome 20.</title>
        <authorList>
            <person name="Deloukas P."/>
            <person name="Matthews L.H."/>
            <person name="Ashurst J.L."/>
            <person name="Burton J."/>
            <person name="Gilbert J.G.R."/>
            <person name="Jones M."/>
            <person name="Stavrides G."/>
            <person name="Almeida J.P."/>
            <person name="Babbage A.K."/>
            <person name="Bagguley C.L."/>
            <person name="Bailey J."/>
            <person name="Barlow K.F."/>
            <person name="Bates K.N."/>
            <person name="Beard L.M."/>
            <person name="Beare D.M."/>
            <person name="Beasley O.P."/>
            <person name="Bird C.P."/>
            <person name="Blakey S.E."/>
            <person name="Bridgeman A.M."/>
            <person name="Brown A.J."/>
            <person name="Buck D."/>
            <person name="Burrill W.D."/>
            <person name="Butler A.P."/>
            <person name="Carder C."/>
            <person name="Carter N.P."/>
            <person name="Chapman J.C."/>
            <person name="Clamp M."/>
            <person name="Clark G."/>
            <person name="Clark L.N."/>
            <person name="Clark S.Y."/>
            <person name="Clee C.M."/>
            <person name="Clegg S."/>
            <person name="Cobley V.E."/>
            <person name="Collier R.E."/>
            <person name="Connor R.E."/>
            <person name="Corby N.R."/>
            <person name="Coulson A."/>
            <person name="Coville G.J."/>
            <person name="Deadman R."/>
            <person name="Dhami P.D."/>
            <person name="Dunn M."/>
            <person name="Ellington A.G."/>
            <person name="Frankland J.A."/>
            <person name="Fraser A."/>
            <person name="French L."/>
            <person name="Garner P."/>
            <person name="Grafham D.V."/>
            <person name="Griffiths C."/>
            <person name="Griffiths M.N.D."/>
            <person name="Gwilliam R."/>
            <person name="Hall R.E."/>
            <person name="Hammond S."/>
            <person name="Harley J.L."/>
            <person name="Heath P.D."/>
            <person name="Ho S."/>
            <person name="Holden J.L."/>
            <person name="Howden P.J."/>
            <person name="Huckle E."/>
            <person name="Hunt A.R."/>
            <person name="Hunt S.E."/>
            <person name="Jekosch K."/>
            <person name="Johnson C.M."/>
            <person name="Johnson D."/>
            <person name="Kay M.P."/>
            <person name="Kimberley A.M."/>
            <person name="King A."/>
            <person name="Knights A."/>
            <person name="Laird G.K."/>
            <person name="Lawlor S."/>
            <person name="Lehvaeslaiho M.H."/>
            <person name="Leversha M.A."/>
            <person name="Lloyd C."/>
            <person name="Lloyd D.M."/>
            <person name="Lovell J.D."/>
            <person name="Marsh V.L."/>
            <person name="Martin S.L."/>
            <person name="McConnachie L.J."/>
            <person name="McLay K."/>
            <person name="McMurray A.A."/>
            <person name="Milne S.A."/>
            <person name="Mistry D."/>
            <person name="Moore M.J.F."/>
            <person name="Mullikin J.C."/>
            <person name="Nickerson T."/>
            <person name="Oliver K."/>
            <person name="Parker A."/>
            <person name="Patel R."/>
            <person name="Pearce T.A.V."/>
            <person name="Peck A.I."/>
            <person name="Phillimore B.J.C.T."/>
            <person name="Prathalingam S.R."/>
            <person name="Plumb R.W."/>
            <person name="Ramsay H."/>
            <person name="Rice C.M."/>
            <person name="Ross M.T."/>
            <person name="Scott C.E."/>
            <person name="Sehra H.K."/>
            <person name="Shownkeen R."/>
            <person name="Sims S."/>
            <person name="Skuce C.D."/>
            <person name="Smith M.L."/>
            <person name="Soderlund C."/>
            <person name="Steward C.A."/>
            <person name="Sulston J.E."/>
            <person name="Swann R.M."/>
            <person name="Sycamore N."/>
            <person name="Taylor R."/>
            <person name="Tee L."/>
            <person name="Thomas D.W."/>
            <person name="Thorpe A."/>
            <person name="Tracey A."/>
            <person name="Tromans A.C."/>
            <person name="Vaudin M."/>
            <person name="Wall M."/>
            <person name="Wallis J.M."/>
            <person name="Whitehead S.L."/>
            <person name="Whittaker P."/>
            <person name="Willey D.L."/>
            <person name="Williams L."/>
            <person name="Williams S.A."/>
            <person name="Wilming L."/>
            <person name="Wray P.W."/>
            <person name="Hubbard T."/>
            <person name="Durbin R.M."/>
            <person name="Bentley D.R."/>
            <person name="Beck S."/>
            <person name="Rogers J."/>
        </authorList>
    </citation>
    <scope>NUCLEOTIDE SEQUENCE [LARGE SCALE GENOMIC DNA]</scope>
</reference>
<reference key="4">
    <citation type="submission" date="2005-09" db="EMBL/GenBank/DDBJ databases">
        <authorList>
            <person name="Mural R.J."/>
            <person name="Istrail S."/>
            <person name="Sutton G.G."/>
            <person name="Florea L."/>
            <person name="Halpern A.L."/>
            <person name="Mobarry C.M."/>
            <person name="Lippert R."/>
            <person name="Walenz B."/>
            <person name="Shatkay H."/>
            <person name="Dew I."/>
            <person name="Miller J.R."/>
            <person name="Flanigan M.J."/>
            <person name="Edwards N.J."/>
            <person name="Bolanos R."/>
            <person name="Fasulo D."/>
            <person name="Halldorsson B.V."/>
            <person name="Hannenhalli S."/>
            <person name="Turner R."/>
            <person name="Yooseph S."/>
            <person name="Lu F."/>
            <person name="Nusskern D.R."/>
            <person name="Shue B.C."/>
            <person name="Zheng X.H."/>
            <person name="Zhong F."/>
            <person name="Delcher A.L."/>
            <person name="Huson D.H."/>
            <person name="Kravitz S.A."/>
            <person name="Mouchard L."/>
            <person name="Reinert K."/>
            <person name="Remington K.A."/>
            <person name="Clark A.G."/>
            <person name="Waterman M.S."/>
            <person name="Eichler E.E."/>
            <person name="Adams M.D."/>
            <person name="Hunkapiller M.W."/>
            <person name="Myers E.W."/>
            <person name="Venter J.C."/>
        </authorList>
    </citation>
    <scope>NUCLEOTIDE SEQUENCE [LARGE SCALE GENOMIC DNA]</scope>
    <scope>VARIANTS GLN-139 AND THR-236</scope>
</reference>
<reference key="5">
    <citation type="journal article" date="2004" name="Genome Res.">
        <title>The status, quality, and expansion of the NIH full-length cDNA project: the Mammalian Gene Collection (MGC).</title>
        <authorList>
            <consortium name="The MGC Project Team"/>
        </authorList>
    </citation>
    <scope>NUCLEOTIDE SEQUENCE [LARGE SCALE MRNA] (ISOFORMS 1; 2 AND 3)</scope>
    <scope>VARIANTS GLN-139 AND THR-236</scope>
    <source>
        <tissue>Hippocampus</tissue>
        <tissue>Pituitary</tissue>
        <tissue>Testis</tissue>
    </source>
</reference>
<reference key="6">
    <citation type="journal article" date="2000" name="Proc. Natl. Acad. Sci. U.S.A.">
        <title>Gene expression profiling in the human hypothalamus-pituitary-adrenal axis and full-length cDNA cloning.</title>
        <authorList>
            <person name="Hu R.-M."/>
            <person name="Han Z.-G."/>
            <person name="Song H.-D."/>
            <person name="Peng Y.-D."/>
            <person name="Huang Q.-H."/>
            <person name="Ren S.-X."/>
            <person name="Gu Y.-J."/>
            <person name="Huang C.-H."/>
            <person name="Li Y.-B."/>
            <person name="Jiang C.-L."/>
            <person name="Fu G."/>
            <person name="Zhang Q.-H."/>
            <person name="Gu B.-W."/>
            <person name="Dai M."/>
            <person name="Mao Y.-F."/>
            <person name="Gao G.-F."/>
            <person name="Rong R."/>
            <person name="Ye M."/>
            <person name="Zhou J."/>
            <person name="Xu S.-H."/>
            <person name="Gu J."/>
            <person name="Shi J.-X."/>
            <person name="Jin W.-R."/>
            <person name="Zhang C.-K."/>
            <person name="Wu T.-M."/>
            <person name="Huang G.-Y."/>
            <person name="Chen Z."/>
            <person name="Chen M.-D."/>
            <person name="Chen J.-L."/>
        </authorList>
    </citation>
    <scope>NUCLEOTIDE SEQUENCE [LARGE SCALE MRNA] OF 280-673 (ISOFORMS 1/2)</scope>
    <source>
        <tissue>Hypothalamus</tissue>
    </source>
</reference>
<reference key="7">
    <citation type="journal article" date="2006" name="Nat. Cell Biol.">
        <title>The Plk1 target Kizuna stabilizes mitotic centrosomes to ensure spindle bipolarity.</title>
        <authorList>
            <person name="Oshimori N."/>
            <person name="Ohsugi M."/>
            <person name="Yamamoto T."/>
        </authorList>
    </citation>
    <scope>FUNCTION</scope>
    <scope>SUBCELLULAR LOCATION</scope>
    <scope>PHOSPHORYLATION AT THR-379</scope>
    <scope>MUTAGENESIS OF THR-249 AND THR-379</scope>
    <scope>INTERACTION WITH AKAP9; ODF2; PCNT AND TUBGCP2</scope>
</reference>
<reference key="8">
    <citation type="journal article" date="2008" name="Proc. Natl. Acad. Sci. U.S.A.">
        <title>A quantitative atlas of mitotic phosphorylation.</title>
        <authorList>
            <person name="Dephoure N."/>
            <person name="Zhou C."/>
            <person name="Villen J."/>
            <person name="Beausoleil S.A."/>
            <person name="Bakalarski C.E."/>
            <person name="Elledge S.J."/>
            <person name="Gygi S.P."/>
        </authorList>
    </citation>
    <scope>PHOSPHORYLATION [LARGE SCALE ANALYSIS] AT SER-317; SER-321; SER-647; SER-650 AND SER-652</scope>
    <scope>IDENTIFICATION BY MASS SPECTROMETRY [LARGE SCALE ANALYSIS]</scope>
    <source>
        <tissue>Cervix carcinoma</tissue>
    </source>
</reference>
<reference key="9">
    <citation type="journal article" date="2009" name="EMBO J.">
        <title>Cep72 regulates the localization of key centrosomal proteins and proper bipolar spindle formation.</title>
        <authorList>
            <person name="Oshimori N."/>
            <person name="Li X."/>
            <person name="Ohsugi M."/>
            <person name="Yamamoto T."/>
        </authorList>
    </citation>
    <scope>INTERACTION WITH CEP72</scope>
</reference>
<reference key="10">
    <citation type="journal article" date="2014" name="Am. J. Hum. Genet.">
        <title>Whole-exome sequencing identifies KIZ as a ciliary gene associated with autosomal-recessive rod-cone dystrophy.</title>
        <authorList>
            <person name="El Shamieh S."/>
            <person name="Neuille M."/>
            <person name="Terray A."/>
            <person name="Orhan E."/>
            <person name="Condroyer C."/>
            <person name="Demontant V."/>
            <person name="Michiels C."/>
            <person name="Antonio A."/>
            <person name="Boyard F."/>
            <person name="Lancelot M.E."/>
            <person name="Letexier M."/>
            <person name="Saraiva J.P."/>
            <person name="Leveillard T."/>
            <person name="Mohand-Said S."/>
            <person name="Goureau O."/>
            <person name="Sahel J.A."/>
            <person name="Zeitz C."/>
            <person name="Audo I."/>
        </authorList>
    </citation>
    <scope>SUBCELLULAR LOCATION</scope>
    <scope>INVOLVEMENT IN RP69</scope>
</reference>
<feature type="chain" id="PRO_0000301851" description="Centrosomal protein kizuna">
    <location>
        <begin position="1"/>
        <end position="673"/>
    </location>
</feature>
<feature type="region of interest" description="Disordered" evidence="1">
    <location>
        <begin position="175"/>
        <end position="207"/>
    </location>
</feature>
<feature type="region of interest" description="Disordered" evidence="1">
    <location>
        <begin position="255"/>
        <end position="413"/>
    </location>
</feature>
<feature type="region of interest" description="Disordered" evidence="1">
    <location>
        <begin position="432"/>
        <end position="480"/>
    </location>
</feature>
<feature type="region of interest" description="Disordered" evidence="1">
    <location>
        <begin position="494"/>
        <end position="516"/>
    </location>
</feature>
<feature type="region of interest" description="Disordered" evidence="1">
    <location>
        <begin position="613"/>
        <end position="673"/>
    </location>
</feature>
<feature type="compositionally biased region" description="Polar residues" evidence="1">
    <location>
        <begin position="196"/>
        <end position="207"/>
    </location>
</feature>
<feature type="compositionally biased region" description="Polar residues" evidence="1">
    <location>
        <begin position="255"/>
        <end position="266"/>
    </location>
</feature>
<feature type="compositionally biased region" description="Basic and acidic residues" evidence="1">
    <location>
        <begin position="267"/>
        <end position="293"/>
    </location>
</feature>
<feature type="compositionally biased region" description="Basic and acidic residues" evidence="1">
    <location>
        <begin position="303"/>
        <end position="316"/>
    </location>
</feature>
<feature type="compositionally biased region" description="Basic and acidic residues" evidence="1">
    <location>
        <begin position="331"/>
        <end position="357"/>
    </location>
</feature>
<feature type="compositionally biased region" description="Basic and acidic residues" evidence="1">
    <location>
        <begin position="471"/>
        <end position="480"/>
    </location>
</feature>
<feature type="compositionally biased region" description="Low complexity" evidence="1">
    <location>
        <begin position="503"/>
        <end position="512"/>
    </location>
</feature>
<feature type="compositionally biased region" description="Low complexity" evidence="1">
    <location>
        <begin position="613"/>
        <end position="625"/>
    </location>
</feature>
<feature type="modified residue" description="Phosphoserine" evidence="12">
    <location>
        <position position="317"/>
    </location>
</feature>
<feature type="modified residue" description="Phosphoserine" evidence="12">
    <location>
        <position position="321"/>
    </location>
</feature>
<feature type="modified residue" description="Phosphothreonine; by PLK1" evidence="4">
    <location>
        <position position="379"/>
    </location>
</feature>
<feature type="modified residue" description="Phosphoserine" evidence="12">
    <location>
        <position position="647"/>
    </location>
</feature>
<feature type="modified residue" description="Phosphoserine" evidence="12">
    <location>
        <position position="650"/>
    </location>
</feature>
<feature type="modified residue" description="Phosphoserine" evidence="12">
    <location>
        <position position="652"/>
    </location>
</feature>
<feature type="splice variant" id="VSP_037837" description="In isoform 5." evidence="8">
    <location>
        <begin position="1"/>
        <end position="133"/>
    </location>
</feature>
<feature type="splice variant" id="VSP_027879" description="In isoform 2." evidence="9">
    <location>
        <begin position="1"/>
        <end position="103"/>
    </location>
</feature>
<feature type="splice variant" id="VSP_027880" description="In isoform 2." evidence="9">
    <original>LK</original>
    <variation>MQ</variation>
    <location>
        <begin position="104"/>
        <end position="105"/>
    </location>
</feature>
<feature type="splice variant" id="VSP_037838" description="In isoform 5." evidence="8">
    <original>EK</original>
    <variation>MQ</variation>
    <location>
        <begin position="134"/>
        <end position="135"/>
    </location>
</feature>
<feature type="splice variant" id="VSP_027881" description="In isoform 3." evidence="9">
    <location>
        <begin position="628"/>
        <end position="673"/>
    </location>
</feature>
<feature type="splice variant" id="VSP_027882" description="In isoform 4." evidence="8 10">
    <original>ALWDESDDSNSEIEAALRPRNHNTDDSDDFYD</original>
    <variation>GERDNRTLDFLFLF</variation>
    <location>
        <begin position="642"/>
        <end position="673"/>
    </location>
</feature>
<feature type="sequence variant" id="VAR_034909" description="In dbSNP:rs4815025." evidence="3 7">
    <original>H</original>
    <variation>Q</variation>
    <location>
        <position position="139"/>
    </location>
</feature>
<feature type="sequence variant" id="VAR_034910" description="In dbSNP:rs2236178." evidence="2 3 7">
    <original>M</original>
    <variation>T</variation>
    <location>
        <position position="236"/>
    </location>
</feature>
<feature type="mutagenesis site" description="Does not affect phosphorylation status." evidence="4">
    <original>T</original>
    <variation>A</variation>
    <location>
        <position position="249"/>
    </location>
</feature>
<feature type="mutagenesis site" description="Abolishes phosphorylation by PLK1." evidence="4">
    <original>T</original>
    <variation>A</variation>
    <location>
        <position position="379"/>
    </location>
</feature>
<feature type="mutagenesis site" description="Phosphomimetic mutant able to partially restore focused bipolar spindles to PLK1-depleted cells that otherwise possess aberrant spindles with diffuse or multiple gamma-tubulin signals." evidence="4">
    <original>T</original>
    <variation>E</variation>
    <location>
        <position position="379"/>
    </location>
</feature>
<feature type="sequence conflict" description="In Ref. 5; AAF67652." evidence="11" ref="5">
    <original>E</original>
    <variation>G</variation>
    <location>
        <position position="369"/>
    </location>
</feature>
<feature type="sequence conflict" description="In Ref. 1; BAG56710." evidence="11" ref="1">
    <original>Q</original>
    <variation>R</variation>
    <location>
        <position position="573"/>
    </location>
</feature>
<feature type="sequence conflict" description="In Ref. 1; BAG59066." evidence="11" ref="1">
    <original>S</original>
    <variation>L</variation>
    <location>
        <position position="594"/>
    </location>
</feature>
<feature type="sequence conflict" description="In Ref. 1; BAG59066." evidence="11" ref="1">
    <original>ALWDESDDSNSEIEAALRPRNHNTDDSDDFY</original>
    <variation>GERDNRTLDFLFLF</variation>
    <location>
        <begin position="642"/>
        <end position="672"/>
    </location>
</feature>
<comment type="function">
    <text evidence="4">Centrosomal protein required for establishing a robust mitotic centrosome architecture that can endure the forces that converge on the centrosomes during spindle formation. Required for stabilizing the expanded pericentriolar material around the centriole.</text>
</comment>
<comment type="subunit">
    <text evidence="4 5">Interacts with AKAP9, CEP72, ODF2, PCNT and TUBGCP2.</text>
</comment>
<comment type="interaction">
    <interactant intactId="EBI-2554344">
        <id>Q2M2Z5</id>
    </interactant>
    <interactant intactId="EBI-739498">
        <id>Q9P209</id>
        <label>CEP72</label>
    </interactant>
    <organismsDiffer>false</organismsDiffer>
    <experiments>3</experiments>
</comment>
<comment type="interaction">
    <interactant intactId="EBI-2554344">
        <id>Q2M2Z5</id>
    </interactant>
    <interactant intactId="EBI-348399">
        <id>P22607</id>
        <label>FGFR3</label>
    </interactant>
    <organismsDiffer>false</organismsDiffer>
    <experiments>3</experiments>
</comment>
<comment type="interaction">
    <interactant intactId="EBI-2554344">
        <id>Q2M2Z5</id>
    </interactant>
    <interactant intactId="EBI-350145">
        <id>P01112</id>
        <label>HRAS</label>
    </interactant>
    <organismsDiffer>false</organismsDiffer>
    <experiments>3</experiments>
</comment>
<comment type="interaction">
    <interactant intactId="EBI-2554344">
        <id>Q2M2Z5</id>
    </interactant>
    <interactant intactId="EBI-748397">
        <id>P50222</id>
        <label>MEOX2</label>
    </interactant>
    <organismsDiffer>false</organismsDiffer>
    <experiments>3</experiments>
</comment>
<comment type="interaction">
    <interactant intactId="EBI-2554344">
        <id>Q2M2Z5</id>
    </interactant>
    <interactant intactId="EBI-2554984">
        <id>Q9Y6A5</id>
        <label>TACC3</label>
    </interactant>
    <organismsDiffer>false</organismsDiffer>
    <experiments>6</experiments>
</comment>
<comment type="interaction">
    <interactant intactId="EBI-2554344">
        <id>Q2M2Z5</id>
    </interactant>
    <interactant intactId="EBI-1105213">
        <id>Q9UBB9</id>
        <label>TFIP11</label>
    </interactant>
    <organismsDiffer>false</organismsDiffer>
    <experiments>3</experiments>
</comment>
<comment type="subcellular location">
    <subcellularLocation>
        <location evidence="4">Cytoplasm</location>
        <location evidence="4">Cytoskeleton</location>
        <location evidence="4">Microtubule organizing center</location>
        <location evidence="4">Centrosome</location>
    </subcellularLocation>
    <subcellularLocation>
        <location evidence="6">Cytoplasm</location>
        <location evidence="6">Cytoskeleton</location>
        <location evidence="6">Cilium basal body</location>
    </subcellularLocation>
    <text evidence="6">Localizes to centrosomes throughout the cell cycle. After centrosome duplication, it usually remains associated only with the mother centrosome, containing the older mature centriole and particles surrounding it. During prophase, additional particles accumulate around both separating centrosomes. Does not accumulate at the microtubule minus ends, but instead localizes to the centrosomes and centrosome-surrounding area in a microtubule-independent and dependent manner, respectively.</text>
</comment>
<comment type="alternative products">
    <event type="alternative splicing"/>
    <isoform>
        <id>Q2M2Z5-1</id>
        <name>1</name>
        <sequence type="displayed"/>
    </isoform>
    <isoform>
        <id>Q2M2Z5-2</id>
        <name>2</name>
        <sequence type="described" ref="VSP_027879 VSP_027880"/>
    </isoform>
    <isoform>
        <id>Q2M2Z5-3</id>
        <name>3</name>
        <sequence type="described" ref="VSP_027881"/>
    </isoform>
    <isoform>
        <id>Q2M2Z5-4</id>
        <name>4</name>
        <sequence type="described" ref="VSP_027882"/>
    </isoform>
    <isoform>
        <id>Q2M2Z5-5</id>
        <name>5</name>
        <sequence type="described" ref="VSP_037837 VSP_037838"/>
    </isoform>
</comment>
<comment type="PTM">
    <text evidence="4">Phosphorylation at Thr-379 by PLK1 is not needed for centrosomal localization or pericentriolar material expansion but is indispensable for spindle-pole stabilization.</text>
</comment>
<comment type="disease" evidence="6">
    <disease id="DI-04068">
        <name>Retinitis pigmentosa 69</name>
        <acronym>RP69</acronym>
        <description>A retinal dystrophy belonging to the group of pigmentary retinopathies. Retinitis pigmentosa is characterized by retinal pigment deposits visible on fundus examination and primary loss of rod photoreceptor cells followed by secondary loss of cone photoreceptors. Patients typically have night vision blindness and loss of midperipheral visual field. As their condition progresses, they lose their far peripheral visual field and eventually central vision as well.</description>
        <dbReference type="MIM" id="615780"/>
    </disease>
    <text>The disease is caused by variants affecting the gene represented in this entry.</text>
</comment>
<comment type="miscellaneous">
    <text>Kizuna means 'bonds' in Japanese.</text>
</comment>
<comment type="similarity">
    <text evidence="11">Belongs to the kizuna family.</text>
</comment>
<comment type="sequence caution" evidence="11">
    <conflict type="frameshift">
        <sequence resource="EMBL-CDS" id="AAF67652"/>
    </conflict>
</comment>
<comment type="sequence caution" evidence="11">
    <conflict type="frameshift">
        <sequence resource="EMBL-CDS" id="AAH39296"/>
    </conflict>
</comment>
<comment type="sequence caution" evidence="11">
    <conflict type="frameshift">
        <sequence resource="EMBL-CDS" id="AAP97689"/>
    </conflict>
</comment>
<comment type="sequence caution" evidence="11">
    <conflict type="erroneous initiation">
        <sequence resource="EMBL-CDS" id="BAG59066"/>
    </conflict>
</comment>